<gene>
    <name evidence="1" type="primary">ccmA</name>
    <name type="ordered locus">SPO2317</name>
</gene>
<evidence type="ECO:0000255" key="1">
    <source>
        <dbReference type="HAMAP-Rule" id="MF_01707"/>
    </source>
</evidence>
<proteinExistence type="inferred from homology"/>
<organism>
    <name type="scientific">Ruegeria pomeroyi (strain ATCC 700808 / DSM 15171 / DSS-3)</name>
    <name type="common">Silicibacter pomeroyi</name>
    <dbReference type="NCBI Taxonomy" id="246200"/>
    <lineage>
        <taxon>Bacteria</taxon>
        <taxon>Pseudomonadati</taxon>
        <taxon>Pseudomonadota</taxon>
        <taxon>Alphaproteobacteria</taxon>
        <taxon>Rhodobacterales</taxon>
        <taxon>Roseobacteraceae</taxon>
        <taxon>Ruegeria</taxon>
    </lineage>
</organism>
<dbReference type="EC" id="7.6.2.5" evidence="1"/>
<dbReference type="EMBL" id="CP000031">
    <property type="protein sequence ID" value="AAV95579.1"/>
    <property type="molecule type" value="Genomic_DNA"/>
</dbReference>
<dbReference type="RefSeq" id="WP_011048034.1">
    <property type="nucleotide sequence ID" value="NC_003911.12"/>
</dbReference>
<dbReference type="SMR" id="Q5LR15"/>
<dbReference type="STRING" id="246200.SPO2317"/>
<dbReference type="PaxDb" id="246200-SPO2317"/>
<dbReference type="KEGG" id="sil:SPO2317"/>
<dbReference type="eggNOG" id="COG4133">
    <property type="taxonomic scope" value="Bacteria"/>
</dbReference>
<dbReference type="HOGENOM" id="CLU_000604_1_2_5"/>
<dbReference type="OrthoDB" id="9800654at2"/>
<dbReference type="Proteomes" id="UP000001023">
    <property type="component" value="Chromosome"/>
</dbReference>
<dbReference type="GO" id="GO:0005886">
    <property type="term" value="C:plasma membrane"/>
    <property type="evidence" value="ECO:0007669"/>
    <property type="project" value="UniProtKB-SubCell"/>
</dbReference>
<dbReference type="GO" id="GO:0015439">
    <property type="term" value="F:ABC-type heme transporter activity"/>
    <property type="evidence" value="ECO:0007669"/>
    <property type="project" value="UniProtKB-EC"/>
</dbReference>
<dbReference type="GO" id="GO:0005524">
    <property type="term" value="F:ATP binding"/>
    <property type="evidence" value="ECO:0007669"/>
    <property type="project" value="UniProtKB-KW"/>
</dbReference>
<dbReference type="GO" id="GO:0016887">
    <property type="term" value="F:ATP hydrolysis activity"/>
    <property type="evidence" value="ECO:0007669"/>
    <property type="project" value="InterPro"/>
</dbReference>
<dbReference type="GO" id="GO:0017004">
    <property type="term" value="P:cytochrome complex assembly"/>
    <property type="evidence" value="ECO:0007669"/>
    <property type="project" value="UniProtKB-KW"/>
</dbReference>
<dbReference type="Gene3D" id="3.40.50.300">
    <property type="entry name" value="P-loop containing nucleotide triphosphate hydrolases"/>
    <property type="match status" value="1"/>
</dbReference>
<dbReference type="InterPro" id="IPR003593">
    <property type="entry name" value="AAA+_ATPase"/>
</dbReference>
<dbReference type="InterPro" id="IPR003439">
    <property type="entry name" value="ABC_transporter-like_ATP-bd"/>
</dbReference>
<dbReference type="InterPro" id="IPR017871">
    <property type="entry name" value="ABC_transporter-like_CS"/>
</dbReference>
<dbReference type="InterPro" id="IPR005895">
    <property type="entry name" value="ABC_transptr_haem_export_CcmA"/>
</dbReference>
<dbReference type="InterPro" id="IPR027417">
    <property type="entry name" value="P-loop_NTPase"/>
</dbReference>
<dbReference type="NCBIfam" id="TIGR01189">
    <property type="entry name" value="ccmA"/>
    <property type="match status" value="1"/>
</dbReference>
<dbReference type="PANTHER" id="PTHR43499">
    <property type="entry name" value="ABC TRANSPORTER I FAMILY MEMBER 1"/>
    <property type="match status" value="1"/>
</dbReference>
<dbReference type="PANTHER" id="PTHR43499:SF1">
    <property type="entry name" value="ABC TRANSPORTER I FAMILY MEMBER 1"/>
    <property type="match status" value="1"/>
</dbReference>
<dbReference type="Pfam" id="PF00005">
    <property type="entry name" value="ABC_tran"/>
    <property type="match status" value="1"/>
</dbReference>
<dbReference type="SMART" id="SM00382">
    <property type="entry name" value="AAA"/>
    <property type="match status" value="1"/>
</dbReference>
<dbReference type="SUPFAM" id="SSF52540">
    <property type="entry name" value="P-loop containing nucleoside triphosphate hydrolases"/>
    <property type="match status" value="1"/>
</dbReference>
<dbReference type="PROSITE" id="PS00211">
    <property type="entry name" value="ABC_TRANSPORTER_1"/>
    <property type="match status" value="1"/>
</dbReference>
<dbReference type="PROSITE" id="PS50893">
    <property type="entry name" value="ABC_TRANSPORTER_2"/>
    <property type="match status" value="1"/>
</dbReference>
<dbReference type="PROSITE" id="PS51243">
    <property type="entry name" value="CCMA"/>
    <property type="match status" value="1"/>
</dbReference>
<comment type="function">
    <text evidence="1">Part of the ABC transporter complex CcmAB involved in the biogenesis of c-type cytochromes; once thought to export heme, this seems not to be the case, but its exact role is uncertain. Responsible for energy coupling to the transport system.</text>
</comment>
<comment type="catalytic activity">
    <reaction evidence="1">
        <text>heme b(in) + ATP + H2O = heme b(out) + ADP + phosphate + H(+)</text>
        <dbReference type="Rhea" id="RHEA:19261"/>
        <dbReference type="ChEBI" id="CHEBI:15377"/>
        <dbReference type="ChEBI" id="CHEBI:15378"/>
        <dbReference type="ChEBI" id="CHEBI:30616"/>
        <dbReference type="ChEBI" id="CHEBI:43474"/>
        <dbReference type="ChEBI" id="CHEBI:60344"/>
        <dbReference type="ChEBI" id="CHEBI:456216"/>
        <dbReference type="EC" id="7.6.2.5"/>
    </reaction>
</comment>
<comment type="subunit">
    <text evidence="1">The complex is composed of two ATP-binding proteins (CcmA) and two transmembrane proteins (CcmB).</text>
</comment>
<comment type="subcellular location">
    <subcellularLocation>
        <location evidence="1">Cell membrane</location>
        <topology evidence="1">Peripheral membrane protein</topology>
    </subcellularLocation>
</comment>
<comment type="similarity">
    <text evidence="1">Belongs to the ABC transporter superfamily. CcmA exporter (TC 3.A.1.107) family.</text>
</comment>
<accession>Q5LR15</accession>
<protein>
    <recommendedName>
        <fullName evidence="1">Cytochrome c biogenesis ATP-binding export protein CcmA</fullName>
        <ecNumber evidence="1">7.6.2.5</ecNumber>
    </recommendedName>
    <alternativeName>
        <fullName evidence="1">Heme exporter protein A</fullName>
    </alternativeName>
</protein>
<keyword id="KW-0067">ATP-binding</keyword>
<keyword id="KW-1003">Cell membrane</keyword>
<keyword id="KW-0201">Cytochrome c-type biogenesis</keyword>
<keyword id="KW-0472">Membrane</keyword>
<keyword id="KW-0547">Nucleotide-binding</keyword>
<keyword id="KW-1185">Reference proteome</keyword>
<keyword id="KW-1278">Translocase</keyword>
<keyword id="KW-0813">Transport</keyword>
<reference key="1">
    <citation type="journal article" date="2004" name="Nature">
        <title>Genome sequence of Silicibacter pomeroyi reveals adaptations to the marine environment.</title>
        <authorList>
            <person name="Moran M.A."/>
            <person name="Buchan A."/>
            <person name="Gonzalez J.M."/>
            <person name="Heidelberg J.F."/>
            <person name="Whitman W.B."/>
            <person name="Kiene R.P."/>
            <person name="Henriksen J.R."/>
            <person name="King G.M."/>
            <person name="Belas R."/>
            <person name="Fuqua C."/>
            <person name="Brinkac L.M."/>
            <person name="Lewis M."/>
            <person name="Johri S."/>
            <person name="Weaver B."/>
            <person name="Pai G."/>
            <person name="Eisen J.A."/>
            <person name="Rahe E."/>
            <person name="Sheldon W.M."/>
            <person name="Ye W."/>
            <person name="Miller T.R."/>
            <person name="Carlton J."/>
            <person name="Rasko D.A."/>
            <person name="Paulsen I.T."/>
            <person name="Ren Q."/>
            <person name="Daugherty S.C."/>
            <person name="DeBoy R.T."/>
            <person name="Dodson R.J."/>
            <person name="Durkin A.S."/>
            <person name="Madupu R."/>
            <person name="Nelson W.C."/>
            <person name="Sullivan S.A."/>
            <person name="Rosovitz M.J."/>
            <person name="Haft D.H."/>
            <person name="Selengut J."/>
            <person name="Ward N."/>
        </authorList>
    </citation>
    <scope>NUCLEOTIDE SEQUENCE [LARGE SCALE GENOMIC DNA]</scope>
    <source>
        <strain>ATCC 700808 / DSM 15171 / DSS-3</strain>
    </source>
</reference>
<reference key="2">
    <citation type="journal article" date="2014" name="Stand. Genomic Sci.">
        <title>An updated genome annotation for the model marine bacterium Ruegeria pomeroyi DSS-3.</title>
        <authorList>
            <person name="Rivers A.R."/>
            <person name="Smith C.B."/>
            <person name="Moran M.A."/>
        </authorList>
    </citation>
    <scope>GENOME REANNOTATION</scope>
    <source>
        <strain>ATCC 700808 / DSM 15171 / DSS-3</strain>
    </source>
</reference>
<sequence>MTLTVTDLAIARGGIPVLEGLSFTLTPGRALILRGPNGAGKTTLLRTLAGLQPPLAGRIEGAEDKIAYAGHSDGLKPTLSVTENLLFWAAVFGGRDITPALEGFALGDLADRHAGNLSAGQKRRLGLARLLVTGRPIWMLDEPTVSLDRDAVAMFADTVRAHLGQGGSALIATHIDLGLDAEVLDVGPYRARPAPLDDPDGDFL</sequence>
<name>CCMA_RUEPO</name>
<feature type="chain" id="PRO_0000092216" description="Cytochrome c biogenesis ATP-binding export protein CcmA">
    <location>
        <begin position="1"/>
        <end position="204"/>
    </location>
</feature>
<feature type="domain" description="ABC transporter" evidence="1">
    <location>
        <begin position="3"/>
        <end position="204"/>
    </location>
</feature>
<feature type="binding site" evidence="1">
    <location>
        <begin position="35"/>
        <end position="42"/>
    </location>
    <ligand>
        <name>ATP</name>
        <dbReference type="ChEBI" id="CHEBI:30616"/>
    </ligand>
</feature>